<feature type="chain" id="PRO_0000124889" description="Large ribosomal subunit protein uL5">
    <location>
        <begin position="1"/>
        <end position="179"/>
    </location>
</feature>
<reference key="1">
    <citation type="journal article" date="2003" name="Nature">
        <title>Genome sequence of Bacillus cereus and comparative analysis with Bacillus anthracis.</title>
        <authorList>
            <person name="Ivanova N."/>
            <person name="Sorokin A."/>
            <person name="Anderson I."/>
            <person name="Galleron N."/>
            <person name="Candelon B."/>
            <person name="Kapatral V."/>
            <person name="Bhattacharyya A."/>
            <person name="Reznik G."/>
            <person name="Mikhailova N."/>
            <person name="Lapidus A."/>
            <person name="Chu L."/>
            <person name="Mazur M."/>
            <person name="Goltsman E."/>
            <person name="Larsen N."/>
            <person name="D'Souza M."/>
            <person name="Walunas T."/>
            <person name="Grechkin Y."/>
            <person name="Pusch G."/>
            <person name="Haselkorn R."/>
            <person name="Fonstein M."/>
            <person name="Ehrlich S.D."/>
            <person name="Overbeek R."/>
            <person name="Kyrpides N.C."/>
        </authorList>
    </citation>
    <scope>NUCLEOTIDE SEQUENCE [LARGE SCALE GENOMIC DNA]</scope>
    <source>
        <strain>ATCC 14579 / DSM 31 / CCUG 7414 / JCM 2152 / NBRC 15305 / NCIMB 9373 / NCTC 2599 / NRRL B-3711</strain>
    </source>
</reference>
<keyword id="KW-1185">Reference proteome</keyword>
<keyword id="KW-0687">Ribonucleoprotein</keyword>
<keyword id="KW-0689">Ribosomal protein</keyword>
<keyword id="KW-0694">RNA-binding</keyword>
<keyword id="KW-0699">rRNA-binding</keyword>
<keyword id="KW-0820">tRNA-binding</keyword>
<dbReference type="EMBL" id="AE016877">
    <property type="protein sequence ID" value="AAP07224.1"/>
    <property type="molecule type" value="Genomic_DNA"/>
</dbReference>
<dbReference type="RefSeq" id="NP_830023.1">
    <property type="nucleotide sequence ID" value="NC_004722.1"/>
</dbReference>
<dbReference type="RefSeq" id="WP_001080831.1">
    <property type="nucleotide sequence ID" value="NZ_CP138336.1"/>
</dbReference>
<dbReference type="SMR" id="Q81J30"/>
<dbReference type="STRING" id="226900.BC_0143"/>
<dbReference type="MetOSite" id="Q81J30"/>
<dbReference type="GeneID" id="93010931"/>
<dbReference type="KEGG" id="bce:BC0143"/>
<dbReference type="PATRIC" id="fig|226900.8.peg.144"/>
<dbReference type="HOGENOM" id="CLU_061015_2_1_9"/>
<dbReference type="OrthoDB" id="9806626at2"/>
<dbReference type="Proteomes" id="UP000001417">
    <property type="component" value="Chromosome"/>
</dbReference>
<dbReference type="GO" id="GO:0022625">
    <property type="term" value="C:cytosolic large ribosomal subunit"/>
    <property type="evidence" value="ECO:0000318"/>
    <property type="project" value="GO_Central"/>
</dbReference>
<dbReference type="GO" id="GO:0003723">
    <property type="term" value="F:RNA binding"/>
    <property type="evidence" value="ECO:0000318"/>
    <property type="project" value="GO_Central"/>
</dbReference>
<dbReference type="GO" id="GO:0019843">
    <property type="term" value="F:rRNA binding"/>
    <property type="evidence" value="ECO:0007669"/>
    <property type="project" value="UniProtKB-UniRule"/>
</dbReference>
<dbReference type="GO" id="GO:0003735">
    <property type="term" value="F:structural constituent of ribosome"/>
    <property type="evidence" value="ECO:0000318"/>
    <property type="project" value="GO_Central"/>
</dbReference>
<dbReference type="GO" id="GO:0000049">
    <property type="term" value="F:tRNA binding"/>
    <property type="evidence" value="ECO:0007669"/>
    <property type="project" value="UniProtKB-UniRule"/>
</dbReference>
<dbReference type="GO" id="GO:0006412">
    <property type="term" value="P:translation"/>
    <property type="evidence" value="ECO:0000318"/>
    <property type="project" value="GO_Central"/>
</dbReference>
<dbReference type="FunFam" id="3.30.1440.10:FF:000001">
    <property type="entry name" value="50S ribosomal protein L5"/>
    <property type="match status" value="1"/>
</dbReference>
<dbReference type="Gene3D" id="3.30.1440.10">
    <property type="match status" value="1"/>
</dbReference>
<dbReference type="HAMAP" id="MF_01333_B">
    <property type="entry name" value="Ribosomal_uL5_B"/>
    <property type="match status" value="1"/>
</dbReference>
<dbReference type="InterPro" id="IPR002132">
    <property type="entry name" value="Ribosomal_uL5"/>
</dbReference>
<dbReference type="InterPro" id="IPR020930">
    <property type="entry name" value="Ribosomal_uL5_bac-type"/>
</dbReference>
<dbReference type="InterPro" id="IPR031309">
    <property type="entry name" value="Ribosomal_uL5_C"/>
</dbReference>
<dbReference type="InterPro" id="IPR020929">
    <property type="entry name" value="Ribosomal_uL5_CS"/>
</dbReference>
<dbReference type="InterPro" id="IPR022803">
    <property type="entry name" value="Ribosomal_uL5_dom_sf"/>
</dbReference>
<dbReference type="InterPro" id="IPR031310">
    <property type="entry name" value="Ribosomal_uL5_N"/>
</dbReference>
<dbReference type="NCBIfam" id="NF000585">
    <property type="entry name" value="PRK00010.1"/>
    <property type="match status" value="1"/>
</dbReference>
<dbReference type="PANTHER" id="PTHR11994">
    <property type="entry name" value="60S RIBOSOMAL PROTEIN L11-RELATED"/>
    <property type="match status" value="1"/>
</dbReference>
<dbReference type="Pfam" id="PF00281">
    <property type="entry name" value="Ribosomal_L5"/>
    <property type="match status" value="1"/>
</dbReference>
<dbReference type="Pfam" id="PF00673">
    <property type="entry name" value="Ribosomal_L5_C"/>
    <property type="match status" value="1"/>
</dbReference>
<dbReference type="PIRSF" id="PIRSF002161">
    <property type="entry name" value="Ribosomal_L5"/>
    <property type="match status" value="1"/>
</dbReference>
<dbReference type="SUPFAM" id="SSF55282">
    <property type="entry name" value="RL5-like"/>
    <property type="match status" value="1"/>
</dbReference>
<dbReference type="PROSITE" id="PS00358">
    <property type="entry name" value="RIBOSOMAL_L5"/>
    <property type="match status" value="1"/>
</dbReference>
<gene>
    <name evidence="1" type="primary">rplE</name>
    <name type="ordered locus">BC_0143</name>
</gene>
<protein>
    <recommendedName>
        <fullName evidence="1">Large ribosomal subunit protein uL5</fullName>
    </recommendedName>
    <alternativeName>
        <fullName evidence="2">50S ribosomal protein L5</fullName>
    </alternativeName>
</protein>
<organism>
    <name type="scientific">Bacillus cereus (strain ATCC 14579 / DSM 31 / CCUG 7414 / JCM 2152 / NBRC 15305 / NCIMB 9373 / NCTC 2599 / NRRL B-3711)</name>
    <dbReference type="NCBI Taxonomy" id="226900"/>
    <lineage>
        <taxon>Bacteria</taxon>
        <taxon>Bacillati</taxon>
        <taxon>Bacillota</taxon>
        <taxon>Bacilli</taxon>
        <taxon>Bacillales</taxon>
        <taxon>Bacillaceae</taxon>
        <taxon>Bacillus</taxon>
        <taxon>Bacillus cereus group</taxon>
    </lineage>
</organism>
<accession>Q81J30</accession>
<evidence type="ECO:0000255" key="1">
    <source>
        <dbReference type="HAMAP-Rule" id="MF_01333"/>
    </source>
</evidence>
<evidence type="ECO:0000305" key="2"/>
<sequence>MNRLKEKFQKEITPALVSKFNYKSVMQVPKIEKIVINTGVGDAVSNSKALDNAVEELTQITGQKPVVTRAKKSIAGFRLREGMPIGAKVTLRGEQMYEFFDKLVSVSLPRVRDFRGVSKKSFDGRGNYTLGVKEQLIFPEIDYDKVSKVRGMDIVIVTTAKTDEEARELLTQFGMPFQK</sequence>
<proteinExistence type="inferred from homology"/>
<name>RL5_BACCR</name>
<comment type="function">
    <text evidence="1">This is one of the proteins that bind and probably mediate the attachment of the 5S RNA into the large ribosomal subunit, where it forms part of the central protuberance. In the 70S ribosome it contacts protein S13 of the 30S subunit (bridge B1b), connecting the 2 subunits; this bridge is implicated in subunit movement. Contacts the P site tRNA; the 5S rRNA and some of its associated proteins might help stabilize positioning of ribosome-bound tRNAs.</text>
</comment>
<comment type="subunit">
    <text evidence="1">Part of the 50S ribosomal subunit; part of the 5S rRNA/L5/L18/L25 subcomplex. Contacts the 5S rRNA and the P site tRNA. Forms a bridge to the 30S subunit in the 70S ribosome.</text>
</comment>
<comment type="similarity">
    <text evidence="1">Belongs to the universal ribosomal protein uL5 family.</text>
</comment>